<keyword id="KW-0165">Cleavage on pair of basic residues</keyword>
<keyword id="KW-1015">Disulfide bond</keyword>
<keyword id="KW-0872">Ion channel impairing toxin</keyword>
<keyword id="KW-0528">Neurotoxin</keyword>
<keyword id="KW-0873">Pyrrolidone carboxylic acid</keyword>
<keyword id="KW-0677">Repeat</keyword>
<keyword id="KW-0964">Secreted</keyword>
<keyword id="KW-0732">Signal</keyword>
<keyword id="KW-0800">Toxin</keyword>
<sequence length="127" mass="14340">MFSTLIFLTAVTLLMMPSQTVPAPLKDVNDIRVKGLLPLLRQRQLQIMPSQTIPALKDVNDIRVKGLLSLLRQRKQEIMPSQTIPALKDVNDIRVKGLLSLLRQRKQEECDDPDGLMCCTISEMPTC</sequence>
<evidence type="ECO:0000250" key="1"/>
<evidence type="ECO:0000305" key="2"/>
<evidence type="ECO:0000305" key="3">
    <source>
    </source>
</evidence>
<accession>P0DKP4</accession>
<feature type="signal peptide" evidence="2">
    <location>
        <begin position="1"/>
        <end position="20"/>
    </location>
</feature>
<feature type="peptide" id="PRO_0000419860" description="Turripeptide OL172 1" evidence="2">
    <location>
        <begin position="21"/>
        <end position="41"/>
    </location>
</feature>
<feature type="propeptide" id="PRO_0000419861" evidence="2">
    <location>
        <begin position="42"/>
        <end position="43"/>
    </location>
</feature>
<feature type="peptide" id="PRO_0000419862" description="Turripeptide OL172 2" evidence="2">
    <location>
        <begin position="44"/>
        <end position="72"/>
    </location>
</feature>
<feature type="propeptide" id="PRO_0000419863" evidence="2">
    <location>
        <begin position="73"/>
        <end position="75"/>
    </location>
</feature>
<feature type="peptide" id="PRO_0000419864" description="Turripeptide OL172 3" evidence="2">
    <location>
        <begin position="76"/>
        <end position="103"/>
    </location>
</feature>
<feature type="propeptide" id="PRO_0000419865" evidence="2">
    <location>
        <begin position="104"/>
        <end position="106"/>
    </location>
</feature>
<feature type="peptide" id="PRO_0000419866" description="Turripeptide OL172 conotoxin-like" evidence="2">
    <location>
        <begin position="107"/>
        <end position="127"/>
    </location>
</feature>
<feature type="modified residue" description="Pyrrolidone carboxylic acid" evidence="3">
    <location>
        <position position="44"/>
    </location>
</feature>
<feature type="modified residue" description="Pyrrolidone carboxylic acid" evidence="3">
    <location>
        <position position="76"/>
    </location>
</feature>
<feature type="modified residue" description="Pyrrolidone carboxylic acid" evidence="3">
    <location>
        <position position="107"/>
    </location>
</feature>
<name>TU172_IOTOL</name>
<protein>
    <recommendedName>
        <fullName>Turripeptide OL172</fullName>
    </recommendedName>
    <component>
        <recommendedName>
            <fullName>Turripeptide OL172 1</fullName>
        </recommendedName>
    </component>
    <component>
        <recommendedName>
            <fullName>Turripeptide OL172 2</fullName>
        </recommendedName>
    </component>
    <component>
        <recommendedName>
            <fullName>Turripeptide OL172 3</fullName>
        </recommendedName>
    </component>
    <component>
        <recommendedName>
            <fullName>Turripeptide OL172 conotoxin-like</fullName>
        </recommendedName>
    </component>
</protein>
<organism>
    <name type="scientific">Iotyrris olangoensis</name>
    <name type="common">Sea snail</name>
    <name type="synonym">Lophiotoma olangoensis</name>
    <dbReference type="NCBI Taxonomy" id="2420066"/>
    <lineage>
        <taxon>Eukaryota</taxon>
        <taxon>Metazoa</taxon>
        <taxon>Spiralia</taxon>
        <taxon>Lophotrochozoa</taxon>
        <taxon>Mollusca</taxon>
        <taxon>Gastropoda</taxon>
        <taxon>Caenogastropoda</taxon>
        <taxon>Neogastropoda</taxon>
        <taxon>Conoidea</taxon>
        <taxon>Turridae</taxon>
        <taxon>Iotyrris</taxon>
    </lineage>
</organism>
<proteinExistence type="evidence at protein level"/>
<comment type="function">
    <text evidence="1">Acts as a neurotoxin by inhibiting an ion channel.</text>
</comment>
<comment type="subcellular location">
    <subcellularLocation>
        <location evidence="1">Secreted</location>
    </subcellularLocation>
</comment>
<comment type="tissue specificity">
    <text>Expressed by the venom duct.</text>
</comment>
<comment type="domain">
    <text>The cysteine framework of the turripeptide OL172 conotoxin-like is C-CC-C.</text>
</comment>
<comment type="PTM">
    <text evidence="1">The turripeptide OL172 conotoxin-like contains 2 disulfide bonds.</text>
</comment>
<dbReference type="SMR" id="P0DKP4"/>
<dbReference type="GO" id="GO:0005576">
    <property type="term" value="C:extracellular region"/>
    <property type="evidence" value="ECO:0007669"/>
    <property type="project" value="UniProtKB-SubCell"/>
</dbReference>
<dbReference type="GO" id="GO:0099106">
    <property type="term" value="F:ion channel regulator activity"/>
    <property type="evidence" value="ECO:0007669"/>
    <property type="project" value="UniProtKB-KW"/>
</dbReference>
<dbReference type="GO" id="GO:0090729">
    <property type="term" value="F:toxin activity"/>
    <property type="evidence" value="ECO:0007669"/>
    <property type="project" value="UniProtKB-KW"/>
</dbReference>
<reference key="1">
    <citation type="journal article" date="2006" name="J. Mol. Evol.">
        <title>Genes expressed in a turrid venom duct: divergence and similarity to conotoxins.</title>
        <authorList>
            <person name="Watkins M."/>
            <person name="Hillyard D.R."/>
            <person name="Olivera B.M."/>
        </authorList>
    </citation>
    <scope>NUCLEOTIDE SEQUENCE [MRNA]</scope>
    <scope>PYROGLUTAMATE FORMATION AT GLN-44; GLN-76 AND GLN-107</scope>
    <source>
        <tissue>Venom duct</tissue>
    </source>
</reference>